<organism>
    <name type="scientific">Saccharomyces cerevisiae (strain ATCC 204508 / S288c)</name>
    <name type="common">Baker's yeast</name>
    <dbReference type="NCBI Taxonomy" id="559292"/>
    <lineage>
        <taxon>Eukaryota</taxon>
        <taxon>Fungi</taxon>
        <taxon>Dikarya</taxon>
        <taxon>Ascomycota</taxon>
        <taxon>Saccharomycotina</taxon>
        <taxon>Saccharomycetes</taxon>
        <taxon>Saccharomycetales</taxon>
        <taxon>Saccharomycetaceae</taxon>
        <taxon>Saccharomyces</taxon>
    </lineage>
</organism>
<accession>P25441</accession>
<accession>D6VRJ8</accession>
<accession>Q12073</accession>
<dbReference type="EMBL" id="X63501">
    <property type="protein sequence ID" value="CAA45073.1"/>
    <property type="molecule type" value="Genomic_DNA"/>
</dbReference>
<dbReference type="EMBL" id="X97751">
    <property type="protein sequence ID" value="CAA66340.1"/>
    <property type="molecule type" value="Genomic_DNA"/>
</dbReference>
<dbReference type="EMBL" id="Z74199">
    <property type="protein sequence ID" value="CAA98725.1"/>
    <property type="molecule type" value="Genomic_DNA"/>
</dbReference>
<dbReference type="EMBL" id="BK006938">
    <property type="protein sequence ID" value="DAA11708.1"/>
    <property type="molecule type" value="Genomic_DNA"/>
</dbReference>
<dbReference type="PIR" id="S67698">
    <property type="entry name" value="S67698"/>
</dbReference>
<dbReference type="RefSeq" id="NP_010131.1">
    <property type="nucleotide sequence ID" value="NM_001180210.1"/>
</dbReference>
<dbReference type="PDB" id="5FJ8">
    <property type="method" value="EM"/>
    <property type="resolution" value="3.90 A"/>
    <property type="chains" value="N=1-422"/>
</dbReference>
<dbReference type="PDB" id="5FJ9">
    <property type="method" value="EM"/>
    <property type="resolution" value="4.60 A"/>
    <property type="chains" value="N=1-422"/>
</dbReference>
<dbReference type="PDB" id="5FJA">
    <property type="method" value="EM"/>
    <property type="resolution" value="4.65 A"/>
    <property type="chains" value="N=1-422"/>
</dbReference>
<dbReference type="PDB" id="6CNB">
    <property type="method" value="EM"/>
    <property type="resolution" value="4.10 A"/>
    <property type="chains" value="N=1-422"/>
</dbReference>
<dbReference type="PDB" id="6CNC">
    <property type="method" value="EM"/>
    <property type="resolution" value="4.10 A"/>
    <property type="chains" value="N=1-422"/>
</dbReference>
<dbReference type="PDB" id="6CND">
    <property type="method" value="EM"/>
    <property type="resolution" value="4.80 A"/>
    <property type="chains" value="N=1-422"/>
</dbReference>
<dbReference type="PDB" id="6CNF">
    <property type="method" value="EM"/>
    <property type="resolution" value="4.50 A"/>
    <property type="chains" value="N=1-422"/>
</dbReference>
<dbReference type="PDB" id="6EU0">
    <property type="method" value="EM"/>
    <property type="resolution" value="4.00 A"/>
    <property type="chains" value="N=1-422"/>
</dbReference>
<dbReference type="PDB" id="6EU1">
    <property type="method" value="EM"/>
    <property type="resolution" value="3.40 A"/>
    <property type="chains" value="N=1-422"/>
</dbReference>
<dbReference type="PDB" id="6EU2">
    <property type="method" value="EM"/>
    <property type="resolution" value="3.40 A"/>
    <property type="chains" value="N=1-422"/>
</dbReference>
<dbReference type="PDB" id="6EU3">
    <property type="method" value="EM"/>
    <property type="resolution" value="3.30 A"/>
    <property type="chains" value="N=1-422"/>
</dbReference>
<dbReference type="PDB" id="6F40">
    <property type="method" value="EM"/>
    <property type="resolution" value="3.70 A"/>
    <property type="chains" value="N=1-422"/>
</dbReference>
<dbReference type="PDB" id="6F41">
    <property type="method" value="EM"/>
    <property type="resolution" value="4.30 A"/>
    <property type="chains" value="N=1-422"/>
</dbReference>
<dbReference type="PDB" id="6F42">
    <property type="method" value="EM"/>
    <property type="resolution" value="5.50 A"/>
    <property type="chains" value="N=1-422"/>
</dbReference>
<dbReference type="PDB" id="6F44">
    <property type="method" value="EM"/>
    <property type="resolution" value="4.20 A"/>
    <property type="chains" value="N=1-422"/>
</dbReference>
<dbReference type="PDB" id="6TUT">
    <property type="method" value="EM"/>
    <property type="resolution" value="3.25 A"/>
    <property type="chains" value="N=1-422"/>
</dbReference>
<dbReference type="PDB" id="7Z0H">
    <property type="method" value="EM"/>
    <property type="resolution" value="2.60 A"/>
    <property type="chains" value="N=195-422"/>
</dbReference>
<dbReference type="PDB" id="7Z1L">
    <property type="method" value="EM"/>
    <property type="resolution" value="2.80 A"/>
    <property type="chains" value="N=1-422"/>
</dbReference>
<dbReference type="PDB" id="7Z1M">
    <property type="method" value="EM"/>
    <property type="resolution" value="3.40 A"/>
    <property type="chains" value="N=1-422"/>
</dbReference>
<dbReference type="PDB" id="7Z1O">
    <property type="method" value="EM"/>
    <property type="resolution" value="2.70 A"/>
    <property type="chains" value="N=1-422"/>
</dbReference>
<dbReference type="PDB" id="7Z2Z">
    <property type="method" value="EM"/>
    <property type="resolution" value="3.07 A"/>
    <property type="chains" value="N=195-422"/>
</dbReference>
<dbReference type="PDB" id="7Z30">
    <property type="method" value="EM"/>
    <property type="resolution" value="2.90 A"/>
    <property type="chains" value="N=195-422"/>
</dbReference>
<dbReference type="PDB" id="7Z31">
    <property type="method" value="EM"/>
    <property type="resolution" value="2.76 A"/>
    <property type="chains" value="N=195-422"/>
</dbReference>
<dbReference type="PDB" id="8BWS">
    <property type="method" value="EM"/>
    <property type="resolution" value="3.20 A"/>
    <property type="chains" value="N=1-422"/>
</dbReference>
<dbReference type="PDBsum" id="5FJ8"/>
<dbReference type="PDBsum" id="5FJ9"/>
<dbReference type="PDBsum" id="5FJA"/>
<dbReference type="PDBsum" id="6CNB"/>
<dbReference type="PDBsum" id="6CNC"/>
<dbReference type="PDBsum" id="6CND"/>
<dbReference type="PDBsum" id="6CNF"/>
<dbReference type="PDBsum" id="6EU0"/>
<dbReference type="PDBsum" id="6EU1"/>
<dbReference type="PDBsum" id="6EU2"/>
<dbReference type="PDBsum" id="6EU3"/>
<dbReference type="PDBsum" id="6F40"/>
<dbReference type="PDBsum" id="6F41"/>
<dbReference type="PDBsum" id="6F42"/>
<dbReference type="PDBsum" id="6F44"/>
<dbReference type="PDBsum" id="6TUT"/>
<dbReference type="PDBsum" id="7Z0H"/>
<dbReference type="PDBsum" id="7Z1L"/>
<dbReference type="PDBsum" id="7Z1M"/>
<dbReference type="PDBsum" id="7Z1O"/>
<dbReference type="PDBsum" id="7Z2Z"/>
<dbReference type="PDBsum" id="7Z30"/>
<dbReference type="PDBsum" id="7Z31"/>
<dbReference type="PDBsum" id="8BWS"/>
<dbReference type="EMDB" id="EMD-10595"/>
<dbReference type="EMDB" id="EMD-14421"/>
<dbReference type="EMDB" id="EMD-14447"/>
<dbReference type="EMDB" id="EMD-14448"/>
<dbReference type="EMDB" id="EMD-14451"/>
<dbReference type="EMDB" id="EMD-14468"/>
<dbReference type="EMDB" id="EMD-14469"/>
<dbReference type="EMDB" id="EMD-14470"/>
<dbReference type="EMDB" id="EMD-16299"/>
<dbReference type="EMDB" id="EMD-3955"/>
<dbReference type="EMDB" id="EMD-3956"/>
<dbReference type="EMDB" id="EMD-3957"/>
<dbReference type="EMDB" id="EMD-3958"/>
<dbReference type="EMDB" id="EMD-4180"/>
<dbReference type="EMDB" id="EMD-4181"/>
<dbReference type="EMDB" id="EMD-4182"/>
<dbReference type="EMDB" id="EMD-4183"/>
<dbReference type="EMDB" id="EMD-7530"/>
<dbReference type="EMDB" id="EMD-7531"/>
<dbReference type="EMDB" id="EMD-7532"/>
<dbReference type="EMDB" id="EMD-7533"/>
<dbReference type="SMR" id="P25441"/>
<dbReference type="BioGRID" id="31911">
    <property type="interactions" value="193"/>
</dbReference>
<dbReference type="ComplexPortal" id="CPX-2660">
    <property type="entry name" value="DNA-directed RNA polymerase III complex"/>
</dbReference>
<dbReference type="DIP" id="DIP-1003N"/>
<dbReference type="FunCoup" id="P25441">
    <property type="interactions" value="191"/>
</dbReference>
<dbReference type="IntAct" id="P25441">
    <property type="interactions" value="44"/>
</dbReference>
<dbReference type="MINT" id="P25441"/>
<dbReference type="STRING" id="4932.YDL150W"/>
<dbReference type="GlyGen" id="P25441">
    <property type="glycosylation" value="1 site"/>
</dbReference>
<dbReference type="iPTMnet" id="P25441"/>
<dbReference type="PaxDb" id="4932-YDL150W"/>
<dbReference type="PeptideAtlas" id="P25441"/>
<dbReference type="EnsemblFungi" id="YDL150W_mRNA">
    <property type="protein sequence ID" value="YDL150W"/>
    <property type="gene ID" value="YDL150W"/>
</dbReference>
<dbReference type="GeneID" id="851404"/>
<dbReference type="KEGG" id="sce:YDL150W"/>
<dbReference type="AGR" id="SGD:S000002309"/>
<dbReference type="SGD" id="S000002309">
    <property type="gene designation" value="RPC53"/>
</dbReference>
<dbReference type="VEuPathDB" id="FungiDB:YDL150W"/>
<dbReference type="eggNOG" id="KOG3122">
    <property type="taxonomic scope" value="Eukaryota"/>
</dbReference>
<dbReference type="GeneTree" id="ENSGT00390000013948"/>
<dbReference type="HOGENOM" id="CLU_056234_0_0_1"/>
<dbReference type="InParanoid" id="P25441"/>
<dbReference type="OMA" id="NNYAGTH"/>
<dbReference type="OrthoDB" id="5836119at2759"/>
<dbReference type="BioCyc" id="YEAST:G3O-29547-MONOMER"/>
<dbReference type="Reactome" id="R-SCE-76066">
    <property type="pathway name" value="RNA Polymerase III Transcription Initiation From Type 2 Promoter"/>
</dbReference>
<dbReference type="BioGRID-ORCS" id="851404">
    <property type="hits" value="4 hits in 10 CRISPR screens"/>
</dbReference>
<dbReference type="EvolutionaryTrace" id="P25441"/>
<dbReference type="PRO" id="PR:P25441"/>
<dbReference type="Proteomes" id="UP000002311">
    <property type="component" value="Chromosome IV"/>
</dbReference>
<dbReference type="RNAct" id="P25441">
    <property type="molecule type" value="protein"/>
</dbReference>
<dbReference type="GO" id="GO:0005654">
    <property type="term" value="C:nucleoplasm"/>
    <property type="evidence" value="ECO:0000304"/>
    <property type="project" value="Reactome"/>
</dbReference>
<dbReference type="GO" id="GO:0005634">
    <property type="term" value="C:nucleus"/>
    <property type="evidence" value="ECO:0000303"/>
    <property type="project" value="ComplexPortal"/>
</dbReference>
<dbReference type="GO" id="GO:0005666">
    <property type="term" value="C:RNA polymerase III complex"/>
    <property type="evidence" value="ECO:0000314"/>
    <property type="project" value="SGD"/>
</dbReference>
<dbReference type="GO" id="GO:0003677">
    <property type="term" value="F:DNA binding"/>
    <property type="evidence" value="ECO:0007669"/>
    <property type="project" value="InterPro"/>
</dbReference>
<dbReference type="GO" id="GO:0006386">
    <property type="term" value="P:termination of RNA polymerase III transcription"/>
    <property type="evidence" value="ECO:0000314"/>
    <property type="project" value="ComplexPortal"/>
</dbReference>
<dbReference type="GO" id="GO:0006383">
    <property type="term" value="P:transcription by RNA polymerase III"/>
    <property type="evidence" value="ECO:0000314"/>
    <property type="project" value="ComplexPortal"/>
</dbReference>
<dbReference type="GO" id="GO:0006384">
    <property type="term" value="P:transcription initiation at RNA polymerase III promoter"/>
    <property type="evidence" value="ECO:0000314"/>
    <property type="project" value="ComplexPortal"/>
</dbReference>
<dbReference type="GO" id="GO:0042797">
    <property type="term" value="P:tRNA transcription by RNA polymerase III"/>
    <property type="evidence" value="ECO:0000314"/>
    <property type="project" value="SGD"/>
</dbReference>
<dbReference type="InterPro" id="IPR007811">
    <property type="entry name" value="RPC4"/>
</dbReference>
<dbReference type="PANTHER" id="PTHR13408">
    <property type="entry name" value="DNA-DIRECTED RNA POLYMERASE III"/>
    <property type="match status" value="1"/>
</dbReference>
<dbReference type="PANTHER" id="PTHR13408:SF0">
    <property type="entry name" value="DNA-DIRECTED RNA POLYMERASE III SUBUNIT RPC4"/>
    <property type="match status" value="1"/>
</dbReference>
<dbReference type="Pfam" id="PF05132">
    <property type="entry name" value="RNA_pol_Rpc4"/>
    <property type="match status" value="1"/>
</dbReference>
<protein>
    <recommendedName>
        <fullName>DNA-directed RNA polymerase III subunit RPC4</fullName>
        <shortName>RNA polymerase III subunit C4</shortName>
    </recommendedName>
    <alternativeName>
        <fullName>C53</fullName>
    </alternativeName>
    <alternativeName>
        <fullName>DNA-directed RNA polymerase III 47 kDa polypeptide</fullName>
    </alternativeName>
</protein>
<proteinExistence type="evidence at protein level"/>
<sequence length="422" mass="46667">MSSNKGNGRLPSLKDSSSNGGGSAKPSLKFKPKAVARKSKEEREAAASKVKLEEESKRGNDKKHFNNKNKRVTGAGGQQRRMAKYLNNTHVISSGPLAAGNFVSEKGDLRRGFIKSEGSGSSLVQKGLETIDNGAESSENEAEDDDNEGVASKSKKKFNMGKEFEARNLIEDEDDGESEKSSDVDMDDEEWRSKRIEQLFPVRPVRVRHEDVETVKREIQEALSEKPTREPTPSVKTEPVGTGLQSYLEERERQVNEKLADLGLEKEFQSVDGKEAAAELELLNADHQHILRKLKKMNNKPERFMVFQLPTRLPAFERPAVKEEKEDMETQASDPSKKKKNIKKKDTKDALSTRELAGKVGSIRVHKSGKLSVKIGNVVMDIGKGAETTFLQDVIALSIADDASSAELLGRVDGKIVVTPQI</sequence>
<comment type="function">
    <text evidence="6">DNA-dependent RNA polymerase catalyzes the transcription of DNA into RNA using the four ribonucleoside triphosphates as substrates. Specific peripheric component of RNA polymerase III which synthesizes small RNAs, such as 5S rRNA and tRNAs. Essential for tRNA synthesis. The RPC53/RPC4-RPC37/RPC5 subcomplex is required for terminator recognition and reinitiation.</text>
</comment>
<comment type="subunit">
    <text evidence="3">Component of the RNA polymerase III (Pol III) complex consisting of 17 subunits. Interacts with RPC37/RPC5. RPC53/RPC4, RPC37/RPC5 and RPC11/RPC10 probably form a Pol III subcomplex.</text>
</comment>
<comment type="interaction">
    <interactant intactId="EBI-15826">
        <id>P25441</id>
    </interactant>
    <interactant intactId="EBI-26370">
        <id>P36121</id>
        <label>RPC37</label>
    </interactant>
    <organismsDiffer>false</organismsDiffer>
    <experiments>3</experiments>
</comment>
<comment type="subcellular location">
    <subcellularLocation>
        <location evidence="4">Nucleus</location>
    </subcellularLocation>
</comment>
<comment type="miscellaneous">
    <text evidence="5">Present with 998 molecules/cell in log phase SD medium.</text>
</comment>
<comment type="similarity">
    <text evidence="7">Belongs to the eukaryotic RPC4/POLR3D RNA polymerase subunit family.</text>
</comment>
<reference key="1">
    <citation type="journal article" date="1992" name="Mol. Cell. Biol.">
        <title>RPC53 encodes a subunit of Saccharomyces cerevisiae RNA polymerase C (III) whose inactivation leads to a predominantly G1 arrest.</title>
        <authorList>
            <person name="Mann C."/>
            <person name="Micouin J.-Y."/>
            <person name="Chiannilkulchai N."/>
            <person name="Treich I."/>
            <person name="Buhler J.-M."/>
            <person name="Sentenac A."/>
        </authorList>
    </citation>
    <scope>NUCLEOTIDE SEQUENCE [GENOMIC DNA]</scope>
</reference>
<reference key="2">
    <citation type="journal article" date="1996" name="Yeast">
        <title>Analysis of a 23 kb region on the left arm of yeast chromosome IV.</title>
        <authorList>
            <person name="Delaveau T.T.D."/>
            <person name="Blugeon C."/>
            <person name="Jacq C."/>
            <person name="Perea J."/>
        </authorList>
    </citation>
    <scope>NUCLEOTIDE SEQUENCE [GENOMIC DNA]</scope>
    <source>
        <strain>ATCC 96604 / S288c / FY1679</strain>
    </source>
</reference>
<reference key="3">
    <citation type="journal article" date="1997" name="Nature">
        <title>The nucleotide sequence of Saccharomyces cerevisiae chromosome IV.</title>
        <authorList>
            <person name="Jacq C."/>
            <person name="Alt-Moerbe J."/>
            <person name="Andre B."/>
            <person name="Arnold W."/>
            <person name="Bahr A."/>
            <person name="Ballesta J.P.G."/>
            <person name="Bargues M."/>
            <person name="Baron L."/>
            <person name="Becker A."/>
            <person name="Biteau N."/>
            <person name="Bloecker H."/>
            <person name="Blugeon C."/>
            <person name="Boskovic J."/>
            <person name="Brandt P."/>
            <person name="Brueckner M."/>
            <person name="Buitrago M.J."/>
            <person name="Coster F."/>
            <person name="Delaveau T."/>
            <person name="del Rey F."/>
            <person name="Dujon B."/>
            <person name="Eide L.G."/>
            <person name="Garcia-Cantalejo J.M."/>
            <person name="Goffeau A."/>
            <person name="Gomez-Peris A."/>
            <person name="Granotier C."/>
            <person name="Hanemann V."/>
            <person name="Hankeln T."/>
            <person name="Hoheisel J.D."/>
            <person name="Jaeger W."/>
            <person name="Jimenez A."/>
            <person name="Jonniaux J.-L."/>
            <person name="Kraemer C."/>
            <person name="Kuester H."/>
            <person name="Laamanen P."/>
            <person name="Legros Y."/>
            <person name="Louis E.J."/>
            <person name="Moeller-Rieker S."/>
            <person name="Monnet A."/>
            <person name="Moro M."/>
            <person name="Mueller-Auer S."/>
            <person name="Nussbaumer B."/>
            <person name="Paricio N."/>
            <person name="Paulin L."/>
            <person name="Perea J."/>
            <person name="Perez-Alonso M."/>
            <person name="Perez-Ortin J.E."/>
            <person name="Pohl T.M."/>
            <person name="Prydz H."/>
            <person name="Purnelle B."/>
            <person name="Rasmussen S.W."/>
            <person name="Remacha M.A."/>
            <person name="Revuelta J.L."/>
            <person name="Rieger M."/>
            <person name="Salom D."/>
            <person name="Saluz H.P."/>
            <person name="Saiz J.E."/>
            <person name="Saren A.-M."/>
            <person name="Schaefer M."/>
            <person name="Scharfe M."/>
            <person name="Schmidt E.R."/>
            <person name="Schneider C."/>
            <person name="Scholler P."/>
            <person name="Schwarz S."/>
            <person name="Soler-Mira A."/>
            <person name="Urrestarazu L.A."/>
            <person name="Verhasselt P."/>
            <person name="Vissers S."/>
            <person name="Voet M."/>
            <person name="Volckaert G."/>
            <person name="Wagner G."/>
            <person name="Wambutt R."/>
            <person name="Wedler E."/>
            <person name="Wedler H."/>
            <person name="Woelfl S."/>
            <person name="Harris D.E."/>
            <person name="Bowman S."/>
            <person name="Brown D."/>
            <person name="Churcher C.M."/>
            <person name="Connor R."/>
            <person name="Dedman K."/>
            <person name="Gentles S."/>
            <person name="Hamlin N."/>
            <person name="Hunt S."/>
            <person name="Jones L."/>
            <person name="McDonald S."/>
            <person name="Murphy L.D."/>
            <person name="Niblett D."/>
            <person name="Odell C."/>
            <person name="Oliver K."/>
            <person name="Rajandream M.A."/>
            <person name="Richards C."/>
            <person name="Shore L."/>
            <person name="Walsh S.V."/>
            <person name="Barrell B.G."/>
            <person name="Dietrich F.S."/>
            <person name="Mulligan J.T."/>
            <person name="Allen E."/>
            <person name="Araujo R."/>
            <person name="Aviles E."/>
            <person name="Berno A."/>
            <person name="Carpenter J."/>
            <person name="Chen E."/>
            <person name="Cherry J.M."/>
            <person name="Chung E."/>
            <person name="Duncan M."/>
            <person name="Hunicke-Smith S."/>
            <person name="Hyman R.W."/>
            <person name="Komp C."/>
            <person name="Lashkari D."/>
            <person name="Lew H."/>
            <person name="Lin D."/>
            <person name="Mosedale D."/>
            <person name="Nakahara K."/>
            <person name="Namath A."/>
            <person name="Oefner P."/>
            <person name="Oh C."/>
            <person name="Petel F.X."/>
            <person name="Roberts D."/>
            <person name="Schramm S."/>
            <person name="Schroeder M."/>
            <person name="Shogren T."/>
            <person name="Shroff N."/>
            <person name="Winant A."/>
            <person name="Yelton M.A."/>
            <person name="Botstein D."/>
            <person name="Davis R.W."/>
            <person name="Johnston M."/>
            <person name="Andrews S."/>
            <person name="Brinkman R."/>
            <person name="Cooper J."/>
            <person name="Ding H."/>
            <person name="Du Z."/>
            <person name="Favello A."/>
            <person name="Fulton L."/>
            <person name="Gattung S."/>
            <person name="Greco T."/>
            <person name="Hallsworth K."/>
            <person name="Hawkins J."/>
            <person name="Hillier L.W."/>
            <person name="Jier M."/>
            <person name="Johnson D."/>
            <person name="Johnston L."/>
            <person name="Kirsten J."/>
            <person name="Kucaba T."/>
            <person name="Langston Y."/>
            <person name="Latreille P."/>
            <person name="Le T."/>
            <person name="Mardis E."/>
            <person name="Menezes S."/>
            <person name="Miller N."/>
            <person name="Nhan M."/>
            <person name="Pauley A."/>
            <person name="Peluso D."/>
            <person name="Rifkin L."/>
            <person name="Riles L."/>
            <person name="Taich A."/>
            <person name="Trevaskis E."/>
            <person name="Vignati D."/>
            <person name="Wilcox L."/>
            <person name="Wohldman P."/>
            <person name="Vaudin M."/>
            <person name="Wilson R."/>
            <person name="Waterston R."/>
            <person name="Albermann K."/>
            <person name="Hani J."/>
            <person name="Heumann K."/>
            <person name="Kleine K."/>
            <person name="Mewes H.-W."/>
            <person name="Zollner A."/>
            <person name="Zaccaria P."/>
        </authorList>
    </citation>
    <scope>NUCLEOTIDE SEQUENCE [LARGE SCALE GENOMIC DNA]</scope>
    <source>
        <strain>ATCC 204508 / S288c</strain>
    </source>
</reference>
<reference key="4">
    <citation type="journal article" date="2014" name="G3 (Bethesda)">
        <title>The reference genome sequence of Saccharomyces cerevisiae: Then and now.</title>
        <authorList>
            <person name="Engel S.R."/>
            <person name="Dietrich F.S."/>
            <person name="Fisk D.G."/>
            <person name="Binkley G."/>
            <person name="Balakrishnan R."/>
            <person name="Costanzo M.C."/>
            <person name="Dwight S.S."/>
            <person name="Hitz B.C."/>
            <person name="Karra K."/>
            <person name="Nash R.S."/>
            <person name="Weng S."/>
            <person name="Wong E.D."/>
            <person name="Lloyd P."/>
            <person name="Skrzypek M.S."/>
            <person name="Miyasato S.R."/>
            <person name="Simison M."/>
            <person name="Cherry J.M."/>
        </authorList>
    </citation>
    <scope>GENOME REANNOTATION</scope>
    <source>
        <strain>ATCC 204508 / S288c</strain>
    </source>
</reference>
<reference key="5">
    <citation type="journal article" date="1998" name="Cold Spring Harb. Symp. Quant. Biol.">
        <title>The yeast RNA polymerase III transcription machinery: a paradigm for eukaryotic gene activation.</title>
        <authorList>
            <person name="Chedin S."/>
            <person name="Ferri M.L."/>
            <person name="Peyroche G."/>
            <person name="Andrau J.-C."/>
            <person name="Jourdain S."/>
            <person name="Lefebvre O."/>
            <person name="Werner M."/>
            <person name="Carles C."/>
            <person name="Sentenac A."/>
        </authorList>
    </citation>
    <scope>REVIEW ON THE RNA POL III COMPLEX</scope>
</reference>
<reference key="6">
    <citation type="journal article" date="1999" name="Proc. Natl. Acad. Sci. U.S.A.">
        <title>A protein-protein interaction map of yeast RNA polymerase III.</title>
        <authorList>
            <person name="Flores A."/>
            <person name="Briand J.-F."/>
            <person name="Gadal O."/>
            <person name="Andrau J.-C."/>
            <person name="Rubbi L."/>
            <person name="Van Mullem V."/>
            <person name="Boschiero C."/>
            <person name="Goussot M."/>
            <person name="Marck C."/>
            <person name="Carles C."/>
            <person name="Thuriaux P."/>
            <person name="Sentenac A."/>
            <person name="Werner M."/>
        </authorList>
    </citation>
    <scope>INTERACTION WITH RPC4</scope>
</reference>
<reference key="7">
    <citation type="journal article" date="2003" name="Nature">
        <title>Global analysis of protein localization in budding yeast.</title>
        <authorList>
            <person name="Huh W.-K."/>
            <person name="Falvo J.V."/>
            <person name="Gerke L.C."/>
            <person name="Carroll A.S."/>
            <person name="Howson R.W."/>
            <person name="Weissman J.S."/>
            <person name="O'Shea E.K."/>
        </authorList>
    </citation>
    <scope>SUBCELLULAR LOCATION [LARGE SCALE ANALYSIS]</scope>
</reference>
<reference key="8">
    <citation type="journal article" date="2003" name="Nature">
        <title>Global analysis of protein expression in yeast.</title>
        <authorList>
            <person name="Ghaemmaghami S."/>
            <person name="Huh W.-K."/>
            <person name="Bower K."/>
            <person name="Howson R.W."/>
            <person name="Belle A."/>
            <person name="Dephoure N."/>
            <person name="O'Shea E.K."/>
            <person name="Weissman J.S."/>
        </authorList>
    </citation>
    <scope>LEVEL OF PROTEIN EXPRESSION [LARGE SCALE ANALYSIS]</scope>
</reference>
<reference key="9">
    <citation type="journal article" date="2006" name="EMBO J.">
        <title>A subcomplex of RNA polymerase III subunits involved in transcription termination and reinitiation.</title>
        <authorList>
            <person name="Landrieux E."/>
            <person name="Alic N."/>
            <person name="Ducrot C."/>
            <person name="Acker J."/>
            <person name="Riva M."/>
            <person name="Carles C."/>
        </authorList>
    </citation>
    <scope>FUNCTION OF THE RPC53-RPC37 SUBCOMPLEX</scope>
</reference>
<reference key="10">
    <citation type="journal article" date="2007" name="J. Proteome Res.">
        <title>Large-scale phosphorylation analysis of alpha-factor-arrested Saccharomyces cerevisiae.</title>
        <authorList>
            <person name="Li X."/>
            <person name="Gerber S.A."/>
            <person name="Rudner A.D."/>
            <person name="Beausoleil S.A."/>
            <person name="Haas W."/>
            <person name="Villen J."/>
            <person name="Elias J.E."/>
            <person name="Gygi S.P."/>
        </authorList>
    </citation>
    <scope>PHOSPHORYLATION [LARGE SCALE ANALYSIS] AT SER-178; SER-182; SER-224; THR-228 AND THR-232</scope>
    <scope>IDENTIFICATION BY MASS SPECTROMETRY [LARGE SCALE ANALYSIS]</scope>
    <source>
        <strain>ADR376</strain>
    </source>
</reference>
<reference key="11">
    <citation type="journal article" date="2007" name="Proc. Natl. Acad. Sci. U.S.A.">
        <title>Analysis of phosphorylation sites on proteins from Saccharomyces cerevisiae by electron transfer dissociation (ETD) mass spectrometry.</title>
        <authorList>
            <person name="Chi A."/>
            <person name="Huttenhower C."/>
            <person name="Geer L.Y."/>
            <person name="Coon J.J."/>
            <person name="Syka J.E.P."/>
            <person name="Bai D.L."/>
            <person name="Shabanowitz J."/>
            <person name="Burke D.J."/>
            <person name="Troyanskaya O.G."/>
            <person name="Hunt D.F."/>
        </authorList>
    </citation>
    <scope>PHOSPHORYLATION [LARGE SCALE ANALYSIS] AT SER-224; THR-228 AND THR-232</scope>
    <scope>IDENTIFICATION BY MASS SPECTROMETRY [LARGE SCALE ANALYSIS]</scope>
</reference>
<reference key="12">
    <citation type="journal article" date="2008" name="Mol. Cell. Proteomics">
        <title>A multidimensional chromatography technology for in-depth phosphoproteome analysis.</title>
        <authorList>
            <person name="Albuquerque C.P."/>
            <person name="Smolka M.B."/>
            <person name="Payne S.H."/>
            <person name="Bafna V."/>
            <person name="Eng J."/>
            <person name="Zhou H."/>
        </authorList>
    </citation>
    <scope>PHOSPHORYLATION [LARGE SCALE ANALYSIS] AT SER-137; SER-138 AND SER-224</scope>
    <scope>IDENTIFICATION BY MASS SPECTROMETRY [LARGE SCALE ANALYSIS]</scope>
</reference>
<reference key="13">
    <citation type="journal article" date="2009" name="Science">
        <title>Global analysis of Cdk1 substrate phosphorylation sites provides insights into evolution.</title>
        <authorList>
            <person name="Holt L.J."/>
            <person name="Tuch B.B."/>
            <person name="Villen J."/>
            <person name="Johnson A.D."/>
            <person name="Gygi S.P."/>
            <person name="Morgan D.O."/>
        </authorList>
    </citation>
    <scope>PHOSPHORYLATION [LARGE SCALE ANALYSIS] AT SER-137; SER-138; SER-178 AND SER-182</scope>
    <scope>IDENTIFICATION BY MASS SPECTROMETRY [LARGE SCALE ANALYSIS]</scope>
</reference>
<evidence type="ECO:0000255" key="1"/>
<evidence type="ECO:0000256" key="2">
    <source>
        <dbReference type="SAM" id="MobiDB-lite"/>
    </source>
</evidence>
<evidence type="ECO:0000269" key="3">
    <source>
    </source>
</evidence>
<evidence type="ECO:0000269" key="4">
    <source>
    </source>
</evidence>
<evidence type="ECO:0000269" key="5">
    <source>
    </source>
</evidence>
<evidence type="ECO:0000269" key="6">
    <source>
    </source>
</evidence>
<evidence type="ECO:0000305" key="7"/>
<evidence type="ECO:0007744" key="8">
    <source>
    </source>
</evidence>
<evidence type="ECO:0007744" key="9">
    <source>
    </source>
</evidence>
<evidence type="ECO:0007744" key="10">
    <source>
    </source>
</evidence>
<evidence type="ECO:0007744" key="11">
    <source>
    </source>
</evidence>
<evidence type="ECO:0007829" key="12">
    <source>
        <dbReference type="PDB" id="6TUT"/>
    </source>
</evidence>
<evidence type="ECO:0007829" key="13">
    <source>
        <dbReference type="PDB" id="7Z31"/>
    </source>
</evidence>
<gene>
    <name type="primary">RPC53</name>
    <name type="synonym">RPC4</name>
    <name type="ordered locus">YDL150W</name>
    <name type="ORF">D1557</name>
</gene>
<keyword id="KW-0002">3D-structure</keyword>
<keyword id="KW-0240">DNA-directed RNA polymerase</keyword>
<keyword id="KW-0539">Nucleus</keyword>
<keyword id="KW-0597">Phosphoprotein</keyword>
<keyword id="KW-1185">Reference proteome</keyword>
<keyword id="KW-0804">Transcription</keyword>
<name>RPC4_YEAST</name>
<feature type="chain" id="PRO_0000073969" description="DNA-directed RNA polymerase III subunit RPC4">
    <location>
        <begin position="1"/>
        <end position="422"/>
    </location>
</feature>
<feature type="region of interest" description="Disordered" evidence="2">
    <location>
        <begin position="1"/>
        <end position="80"/>
    </location>
</feature>
<feature type="region of interest" description="Disordered" evidence="2">
    <location>
        <begin position="115"/>
        <end position="190"/>
    </location>
</feature>
<feature type="region of interest" description="Disordered" evidence="2">
    <location>
        <begin position="219"/>
        <end position="244"/>
    </location>
</feature>
<feature type="region of interest" description="Disordered" evidence="2">
    <location>
        <begin position="318"/>
        <end position="350"/>
    </location>
</feature>
<feature type="short sequence motif" description="Nuclear localization signal" evidence="1">
    <location>
        <begin position="25"/>
        <end position="29"/>
    </location>
</feature>
<feature type="compositionally biased region" description="Basic residues" evidence="2">
    <location>
        <begin position="28"/>
        <end position="37"/>
    </location>
</feature>
<feature type="compositionally biased region" description="Basic and acidic residues" evidence="2">
    <location>
        <begin position="38"/>
        <end position="64"/>
    </location>
</feature>
<feature type="compositionally biased region" description="Acidic residues" evidence="2">
    <location>
        <begin position="138"/>
        <end position="148"/>
    </location>
</feature>
<feature type="compositionally biased region" description="Basic and acidic residues" evidence="2">
    <location>
        <begin position="160"/>
        <end position="170"/>
    </location>
</feature>
<feature type="compositionally biased region" description="Basic and acidic residues" evidence="2">
    <location>
        <begin position="219"/>
        <end position="229"/>
    </location>
</feature>
<feature type="modified residue" description="Phosphoserine" evidence="10 11">
    <location>
        <position position="137"/>
    </location>
</feature>
<feature type="modified residue" description="Phosphoserine" evidence="10 11">
    <location>
        <position position="138"/>
    </location>
</feature>
<feature type="modified residue" description="Phosphoserine" evidence="9 11">
    <location>
        <position position="178"/>
    </location>
</feature>
<feature type="modified residue" description="Phosphoserine" evidence="9 11">
    <location>
        <position position="182"/>
    </location>
</feature>
<feature type="modified residue" description="Phosphoserine" evidence="8 9 10">
    <location>
        <position position="224"/>
    </location>
</feature>
<feature type="modified residue" description="Phosphothreonine" evidence="8 9">
    <location>
        <position position="228"/>
    </location>
</feature>
<feature type="modified residue" description="Phosphothreonine" evidence="8 9">
    <location>
        <position position="232"/>
    </location>
</feature>
<feature type="sequence conflict" description="In Ref. 1; CAA45073." evidence="7" ref="1">
    <original>E</original>
    <variation>K</variation>
    <location>
        <position position="42"/>
    </location>
</feature>
<feature type="sequence conflict" description="In Ref. 1." evidence="7" ref="1">
    <original>L</original>
    <variation>LGL</variation>
    <location>
        <position position="264"/>
    </location>
</feature>
<feature type="sequence conflict" description="In Ref. 1; CAA45073." evidence="7" ref="1">
    <original>NA</original>
    <variation>KR</variation>
    <location>
        <begin position="284"/>
        <end position="285"/>
    </location>
</feature>
<feature type="sequence conflict" description="In Ref. 1; CAA45073." evidence="7" ref="1">
    <original>Q</original>
    <variation>H</variation>
    <location>
        <position position="392"/>
    </location>
</feature>
<feature type="helix" evidence="13">
    <location>
        <begin position="212"/>
        <end position="218"/>
    </location>
</feature>
<feature type="turn" evidence="13">
    <location>
        <begin position="219"/>
        <end position="224"/>
    </location>
</feature>
<feature type="helix" evidence="13">
    <location>
        <begin position="275"/>
        <end position="295"/>
    </location>
</feature>
<feature type="strand" evidence="13">
    <location>
        <begin position="297"/>
        <end position="299"/>
    </location>
</feature>
<feature type="strand" evidence="13">
    <location>
        <begin position="301"/>
        <end position="308"/>
    </location>
</feature>
<feature type="turn" evidence="12">
    <location>
        <begin position="316"/>
        <end position="319"/>
    </location>
</feature>
<feature type="helix" evidence="12">
    <location>
        <begin position="322"/>
        <end position="328"/>
    </location>
</feature>
<feature type="strand" evidence="13">
    <location>
        <begin position="358"/>
        <end position="362"/>
    </location>
</feature>
<feature type="helix" evidence="13">
    <location>
        <begin position="367"/>
        <end position="369"/>
    </location>
</feature>
<feature type="strand" evidence="13">
    <location>
        <begin position="373"/>
        <end position="378"/>
    </location>
</feature>
<feature type="strand" evidence="13">
    <location>
        <begin position="380"/>
        <end position="383"/>
    </location>
</feature>
<feature type="strand" evidence="13">
    <location>
        <begin position="390"/>
        <end position="399"/>
    </location>
</feature>
<feature type="strand" evidence="12">
    <location>
        <begin position="401"/>
        <end position="403"/>
    </location>
</feature>
<feature type="strand" evidence="13">
    <location>
        <begin position="404"/>
        <end position="420"/>
    </location>
</feature>